<comment type="function">
    <text>P-II indirectly controls the transcription of the GS gene (glnA). P-II prevents NR-II-catalyzed conversion of NR-I to NR-I-phosphate, the transcriptional activator of glnA. When P-II is phosphorylated, these events are reversed. In nitrogen-limiting conditions, when the ratio of Gln to 2-ketoglutarate decreases, P-II is phosphorylated which allows the deadenylation of glutamine synthetase (GS), thus activating the enzyme.</text>
</comment>
<comment type="subunit">
    <text evidence="1">Homotrimer.</text>
</comment>
<comment type="PTM">
    <text evidence="1">Phosphorylation dependent on the nitrogen source and spectral light quality.</text>
</comment>
<comment type="similarity">
    <text evidence="2">Belongs to the P(II) protein family.</text>
</comment>
<dbReference type="EMBL" id="AF079137">
    <property type="protein sequence ID" value="AAF04333.1"/>
    <property type="molecule type" value="Genomic_DNA"/>
</dbReference>
<dbReference type="EMBL" id="AP008231">
    <property type="protein sequence ID" value="BAD79382.1"/>
    <property type="molecule type" value="Genomic_DNA"/>
</dbReference>
<dbReference type="PIR" id="A39696">
    <property type="entry name" value="A39696"/>
</dbReference>
<dbReference type="RefSeq" id="WP_011243504.1">
    <property type="nucleotide sequence ID" value="NZ_CP085785.1"/>
</dbReference>
<dbReference type="SMR" id="P0A3F5"/>
<dbReference type="KEGG" id="syc:syc1192_d"/>
<dbReference type="eggNOG" id="COG0347">
    <property type="taxonomic scope" value="Bacteria"/>
</dbReference>
<dbReference type="Proteomes" id="UP000001175">
    <property type="component" value="Chromosome"/>
</dbReference>
<dbReference type="GO" id="GO:0005829">
    <property type="term" value="C:cytosol"/>
    <property type="evidence" value="ECO:0007669"/>
    <property type="project" value="TreeGrafter"/>
</dbReference>
<dbReference type="GO" id="GO:0005524">
    <property type="term" value="F:ATP binding"/>
    <property type="evidence" value="ECO:0007669"/>
    <property type="project" value="TreeGrafter"/>
</dbReference>
<dbReference type="GO" id="GO:0030234">
    <property type="term" value="F:enzyme regulator activity"/>
    <property type="evidence" value="ECO:0007669"/>
    <property type="project" value="InterPro"/>
</dbReference>
<dbReference type="GO" id="GO:0006808">
    <property type="term" value="P:regulation of nitrogen utilization"/>
    <property type="evidence" value="ECO:0007669"/>
    <property type="project" value="InterPro"/>
</dbReference>
<dbReference type="FunFam" id="3.30.70.120:FF:000001">
    <property type="entry name" value="Nitrogen regulatory protein P-II"/>
    <property type="match status" value="1"/>
</dbReference>
<dbReference type="Gene3D" id="3.30.70.120">
    <property type="match status" value="1"/>
</dbReference>
<dbReference type="InterPro" id="IPR002187">
    <property type="entry name" value="N-reg_PII"/>
</dbReference>
<dbReference type="InterPro" id="IPR011322">
    <property type="entry name" value="N-reg_PII-like_a/b"/>
</dbReference>
<dbReference type="InterPro" id="IPR015867">
    <property type="entry name" value="N-reg_PII/ATP_PRibTrfase_C"/>
</dbReference>
<dbReference type="InterPro" id="IPR017918">
    <property type="entry name" value="N-reg_PII_CS"/>
</dbReference>
<dbReference type="InterPro" id="IPR002332">
    <property type="entry name" value="N-reg_PII_urydylation_site"/>
</dbReference>
<dbReference type="PANTHER" id="PTHR30115">
    <property type="entry name" value="NITROGEN REGULATORY PROTEIN P-II"/>
    <property type="match status" value="1"/>
</dbReference>
<dbReference type="PANTHER" id="PTHR30115:SF11">
    <property type="entry name" value="NITROGEN REGULATORY PROTEIN P-II HOMOLOG"/>
    <property type="match status" value="1"/>
</dbReference>
<dbReference type="Pfam" id="PF00543">
    <property type="entry name" value="P-II"/>
    <property type="match status" value="1"/>
</dbReference>
<dbReference type="PIRSF" id="PIRSF039144">
    <property type="entry name" value="GlnB"/>
    <property type="match status" value="1"/>
</dbReference>
<dbReference type="PRINTS" id="PR00340">
    <property type="entry name" value="PIIGLNB"/>
</dbReference>
<dbReference type="SMART" id="SM00938">
    <property type="entry name" value="P-II"/>
    <property type="match status" value="1"/>
</dbReference>
<dbReference type="SUPFAM" id="SSF54913">
    <property type="entry name" value="GlnB-like"/>
    <property type="match status" value="1"/>
</dbReference>
<dbReference type="PROSITE" id="PS00638">
    <property type="entry name" value="PII_GLNB_CTER"/>
    <property type="match status" value="1"/>
</dbReference>
<dbReference type="PROSITE" id="PS51343">
    <property type="entry name" value="PII_GLNB_DOM"/>
    <property type="match status" value="1"/>
</dbReference>
<dbReference type="PROSITE" id="PS00496">
    <property type="entry name" value="PII_GLNB_UMP"/>
    <property type="match status" value="1"/>
</dbReference>
<protein>
    <recommendedName>
        <fullName>Nitrogen regulatory protein P-II</fullName>
    </recommendedName>
    <alternativeName>
        <fullName>PII signal transducing protein</fullName>
    </alternativeName>
</protein>
<sequence length="112" mass="12391">MKKIEAIIRPFKLDEVKIALVNAGIVGMTVSEVRGFGRQKGQTERYRGSEYTVEFLQKLKLEIVVEDAQVDTVIDKIVAAARTGEIGDGKIFVSPVDQTIRIRTGEKNADAI</sequence>
<reference key="1">
    <citation type="submission" date="1998-07" db="EMBL/GenBank/DDBJ databases">
        <title>Genes required for c-type cytochrome biogenesis.</title>
        <authorList>
            <person name="Inoue K."/>
            <person name="Bryant D.A."/>
        </authorList>
    </citation>
    <scope>NUCLEOTIDE SEQUENCE [GENOMIC DNA]</scope>
</reference>
<reference key="2">
    <citation type="journal article" date="2007" name="Photosyn. Res.">
        <title>Complete nucleotide sequence of the freshwater unicellular cyanobacterium Synechococcus elongatus PCC 6301 chromosome: gene content and organization.</title>
        <authorList>
            <person name="Sugita C."/>
            <person name="Ogata K."/>
            <person name="Shikata M."/>
            <person name="Jikuya H."/>
            <person name="Takano J."/>
            <person name="Furumichi M."/>
            <person name="Kanehisa M."/>
            <person name="Omata T."/>
            <person name="Sugiura M."/>
            <person name="Sugita M."/>
        </authorList>
    </citation>
    <scope>NUCLEOTIDE SEQUENCE [LARGE SCALE GENOMIC DNA]</scope>
    <source>
        <strain>ATCC 27144 / PCC 6301 / SAUG 1402/1</strain>
    </source>
</reference>
<reference key="3">
    <citation type="journal article" date="1991" name="Biochim. Biophys. Acta">
        <title>Polypeptide composition of the Photosystem I complex and the Photosystem I core protein from Synechococcus sp. PCC 6301.</title>
        <authorList>
            <person name="Li N."/>
            <person name="Warren P.V."/>
            <person name="Golbeck J.H."/>
            <person name="Frank G."/>
            <person name="Zuber H."/>
            <person name="Bryant D.A."/>
        </authorList>
    </citation>
    <scope>PROTEIN SEQUENCE OF 1-40</scope>
</reference>
<reference key="4">
    <citation type="journal article" date="1990" name="FEBS Lett.">
        <title>Modification of a glnB-like gene product by photosynthetic electron transport in the cyanobacterium Synechococcus 6301.</title>
        <authorList>
            <person name="Harrison M.A."/>
            <person name="Keen J.N."/>
            <person name="Findlay J.B.C."/>
            <person name="Allen J.F."/>
        </authorList>
    </citation>
    <scope>PROTEIN SEQUENCE OF 1-30</scope>
</reference>
<accession>P0A3F5</accession>
<accession>P80016</accession>
<feature type="chain" id="PRO_0000139793" description="Nitrogen regulatory protein P-II">
    <location>
        <begin position="1"/>
        <end position="112"/>
    </location>
</feature>
<feature type="modified residue" description="Phosphoserine" evidence="1">
    <location>
        <position position="49"/>
    </location>
</feature>
<feature type="modified residue" description="O-UMP-tyrosine" evidence="2">
    <location>
        <position position="51"/>
    </location>
</feature>
<evidence type="ECO:0000250" key="1"/>
<evidence type="ECO:0000255" key="2">
    <source>
        <dbReference type="PROSITE-ProRule" id="PRU00675"/>
    </source>
</evidence>
<keyword id="KW-0903">Direct protein sequencing</keyword>
<keyword id="KW-0547">Nucleotide-binding</keyword>
<keyword id="KW-0597">Phosphoprotein</keyword>
<keyword id="KW-0804">Transcription</keyword>
<keyword id="KW-0805">Transcription regulation</keyword>
<name>GLNB_SYNP6</name>
<organism>
    <name type="scientific">Synechococcus sp. (strain ATCC 27144 / PCC 6301 / SAUG 1402/1)</name>
    <name type="common">Anacystis nidulans</name>
    <dbReference type="NCBI Taxonomy" id="269084"/>
    <lineage>
        <taxon>Bacteria</taxon>
        <taxon>Bacillati</taxon>
        <taxon>Cyanobacteriota</taxon>
        <taxon>Cyanophyceae</taxon>
        <taxon>Synechococcales</taxon>
        <taxon>Synechococcaceae</taxon>
        <taxon>Synechococcus</taxon>
    </lineage>
</organism>
<proteinExistence type="evidence at protein level"/>
<gene>
    <name type="primary">glnB</name>
    <name type="ordered locus">syc1192_d</name>
</gene>